<name>YCIZ_ECOLI</name>
<protein>
    <recommendedName>
        <fullName>UPF0509 protein YciZ</fullName>
    </recommendedName>
</protein>
<proteinExistence type="evidence at protein level"/>
<reference key="1">
    <citation type="journal article" date="1997" name="Science">
        <title>The complete genome sequence of Escherichia coli K-12.</title>
        <authorList>
            <person name="Blattner F.R."/>
            <person name="Plunkett G. III"/>
            <person name="Bloch C.A."/>
            <person name="Perna N.T."/>
            <person name="Burland V."/>
            <person name="Riley M."/>
            <person name="Collado-Vides J."/>
            <person name="Glasner J.D."/>
            <person name="Rode C.K."/>
            <person name="Mayhew G.F."/>
            <person name="Gregor J."/>
            <person name="Davis N.W."/>
            <person name="Kirkpatrick H.A."/>
            <person name="Goeden M.A."/>
            <person name="Rose D.J."/>
            <person name="Mau B."/>
            <person name="Shao Y."/>
        </authorList>
    </citation>
    <scope>NUCLEOTIDE SEQUENCE [LARGE SCALE GENOMIC DNA]</scope>
    <source>
        <strain>K12 / MG1655 / ATCC 47076</strain>
    </source>
</reference>
<reference key="2">
    <citation type="journal article" date="2006" name="Mol. Syst. Biol.">
        <title>Highly accurate genome sequences of Escherichia coli K-12 strains MG1655 and W3110.</title>
        <authorList>
            <person name="Hayashi K."/>
            <person name="Morooka N."/>
            <person name="Yamamoto Y."/>
            <person name="Fujita K."/>
            <person name="Isono K."/>
            <person name="Choi S."/>
            <person name="Ohtsubo E."/>
            <person name="Baba T."/>
            <person name="Wanner B.L."/>
            <person name="Mori H."/>
            <person name="Horiuchi T."/>
        </authorList>
    </citation>
    <scope>NUCLEOTIDE SEQUENCE [LARGE SCALE GENOMIC DNA]</scope>
    <source>
        <strain>K12 / W3110 / ATCC 27325 / DSM 5911</strain>
    </source>
</reference>
<reference key="3">
    <citation type="journal article" date="2018" name="Proteomics">
        <title>Identifying new small proteins in Escherichia coli.</title>
        <authorList>
            <person name="VanOrsdel C.E."/>
            <person name="Kelly J.P."/>
            <person name="Burke B.N."/>
            <person name="Lein C.D."/>
            <person name="Oufiero C.E."/>
            <person name="Sanchez J.F."/>
            <person name="Wimmers L.E."/>
            <person name="Hearn D.J."/>
            <person name="Abuikhdair F.J."/>
            <person name="Barnhart K.R."/>
            <person name="Duley M.L."/>
            <person name="Ernst S.E.G."/>
            <person name="Kenerson B.A."/>
            <person name="Serafin A.J."/>
            <person name="Hemm M.R."/>
        </authorList>
    </citation>
    <scope>IDENTIFICATION</scope>
    <scope>INDUCTION</scope>
</reference>
<organism>
    <name type="scientific">Escherichia coli (strain K12)</name>
    <dbReference type="NCBI Taxonomy" id="83333"/>
    <lineage>
        <taxon>Bacteria</taxon>
        <taxon>Pseudomonadati</taxon>
        <taxon>Pseudomonadota</taxon>
        <taxon>Gammaproteobacteria</taxon>
        <taxon>Enterobacterales</taxon>
        <taxon>Enterobacteriaceae</taxon>
        <taxon>Escherichia</taxon>
    </lineage>
</organism>
<sequence length="57" mass="6441">MSEFDAQRVAERIDIVLDILVAGDYHSAIHNLEILKAELLRQVAESTPDIPKAPWEI</sequence>
<comment type="induction">
    <text evidence="1">Expressed approximately equally in exponential and stationary phases (at protein level).</text>
</comment>
<comment type="similarity">
    <text evidence="2">Belongs to the UPF0509 family.</text>
</comment>
<keyword id="KW-1185">Reference proteome</keyword>
<accession>A5A614</accession>
<feature type="chain" id="PRO_0000312006" description="UPF0509 protein YciZ">
    <location>
        <begin position="1"/>
        <end position="57"/>
    </location>
</feature>
<gene>
    <name type="primary">yciZ</name>
    <name type="ordered locus">b4596</name>
    <name type="ordered locus">JW1277</name>
</gene>
<evidence type="ECO:0000269" key="1">
    <source>
    </source>
</evidence>
<evidence type="ECO:0000305" key="2"/>
<dbReference type="EMBL" id="U00096">
    <property type="protein sequence ID" value="ABP93443.1"/>
    <property type="molecule type" value="Genomic_DNA"/>
</dbReference>
<dbReference type="EMBL" id="AP009048">
    <property type="status" value="NOT_ANNOTATED_CDS"/>
    <property type="molecule type" value="Genomic_DNA"/>
</dbReference>
<dbReference type="RefSeq" id="WP_001288368.1">
    <property type="nucleotide sequence ID" value="NZ_STEB01000005.1"/>
</dbReference>
<dbReference type="RefSeq" id="YP_001165317.1">
    <property type="nucleotide sequence ID" value="NC_000913.3"/>
</dbReference>
<dbReference type="SMR" id="A5A614"/>
<dbReference type="FunCoup" id="A5A614">
    <property type="interactions" value="3"/>
</dbReference>
<dbReference type="STRING" id="511145.b4596"/>
<dbReference type="jPOST" id="A5A614"/>
<dbReference type="PaxDb" id="511145-b4596"/>
<dbReference type="EnsemblBacteria" id="ABP93443">
    <property type="protein sequence ID" value="ABP93443"/>
    <property type="gene ID" value="b4596"/>
</dbReference>
<dbReference type="GeneID" id="5061509"/>
<dbReference type="GeneID" id="93775408"/>
<dbReference type="KEGG" id="eco:b4596"/>
<dbReference type="KEGG" id="ecoc:C3026_07540"/>
<dbReference type="PATRIC" id="fig|511145.12.peg.1337"/>
<dbReference type="eggNOG" id="ENOG5032YBK">
    <property type="taxonomic scope" value="Bacteria"/>
</dbReference>
<dbReference type="InParanoid" id="A5A614"/>
<dbReference type="OMA" id="AQPKAPW"/>
<dbReference type="OrthoDB" id="6561755at2"/>
<dbReference type="PhylomeDB" id="A5A614"/>
<dbReference type="BioCyc" id="EcoCyc:MONOMER0-2820"/>
<dbReference type="PRO" id="PR:A5A614"/>
<dbReference type="Proteomes" id="UP000000625">
    <property type="component" value="Chromosome"/>
</dbReference>
<dbReference type="HAMAP" id="MF_01641">
    <property type="entry name" value="UPF0509"/>
    <property type="match status" value="1"/>
</dbReference>
<dbReference type="InterPro" id="IPR020887">
    <property type="entry name" value="UPF0509"/>
</dbReference>
<dbReference type="NCBIfam" id="NF010179">
    <property type="entry name" value="PRK13658.1"/>
    <property type="match status" value="1"/>
</dbReference>
<dbReference type="Pfam" id="PF23675">
    <property type="entry name" value="YciZ"/>
    <property type="match status" value="1"/>
</dbReference>